<evidence type="ECO:0000255" key="1">
    <source>
        <dbReference type="HAMAP-Rule" id="MF_00219"/>
    </source>
</evidence>
<keyword id="KW-0378">Hydrolase</keyword>
<keyword id="KW-0479">Metal-binding</keyword>
<keyword id="KW-0665">Pyrimidine biosynthesis</keyword>
<keyword id="KW-1185">Reference proteome</keyword>
<keyword id="KW-0862">Zinc</keyword>
<feature type="chain" id="PRO_1000100040" description="Dihydroorotase">
    <location>
        <begin position="1"/>
        <end position="346"/>
    </location>
</feature>
<feature type="active site" evidence="1">
    <location>
        <position position="250"/>
    </location>
</feature>
<feature type="binding site" evidence="1">
    <location>
        <position position="17"/>
    </location>
    <ligand>
        <name>Zn(2+)</name>
        <dbReference type="ChEBI" id="CHEBI:29105"/>
        <label>1</label>
    </ligand>
</feature>
<feature type="binding site" evidence="1">
    <location>
        <begin position="19"/>
        <end position="21"/>
    </location>
    <ligand>
        <name>substrate</name>
    </ligand>
</feature>
<feature type="binding site" evidence="1">
    <location>
        <position position="19"/>
    </location>
    <ligand>
        <name>Zn(2+)</name>
        <dbReference type="ChEBI" id="CHEBI:29105"/>
        <label>1</label>
    </ligand>
</feature>
<feature type="binding site" evidence="1">
    <location>
        <position position="45"/>
    </location>
    <ligand>
        <name>substrate</name>
    </ligand>
</feature>
<feature type="binding site" description="via carbamate group" evidence="1">
    <location>
        <position position="102"/>
    </location>
    <ligand>
        <name>Zn(2+)</name>
        <dbReference type="ChEBI" id="CHEBI:29105"/>
        <label>1</label>
    </ligand>
</feature>
<feature type="binding site" description="via carbamate group" evidence="1">
    <location>
        <position position="102"/>
    </location>
    <ligand>
        <name>Zn(2+)</name>
        <dbReference type="ChEBI" id="CHEBI:29105"/>
        <label>2</label>
    </ligand>
</feature>
<feature type="binding site" evidence="1">
    <location>
        <position position="139"/>
    </location>
    <ligand>
        <name>substrate</name>
    </ligand>
</feature>
<feature type="binding site" evidence="1">
    <location>
        <position position="139"/>
    </location>
    <ligand>
        <name>Zn(2+)</name>
        <dbReference type="ChEBI" id="CHEBI:29105"/>
        <label>2</label>
    </ligand>
</feature>
<feature type="binding site" evidence="1">
    <location>
        <position position="177"/>
    </location>
    <ligand>
        <name>Zn(2+)</name>
        <dbReference type="ChEBI" id="CHEBI:29105"/>
        <label>2</label>
    </ligand>
</feature>
<feature type="binding site" evidence="1">
    <location>
        <position position="222"/>
    </location>
    <ligand>
        <name>substrate</name>
    </ligand>
</feature>
<feature type="binding site" evidence="1">
    <location>
        <position position="250"/>
    </location>
    <ligand>
        <name>Zn(2+)</name>
        <dbReference type="ChEBI" id="CHEBI:29105"/>
        <label>1</label>
    </ligand>
</feature>
<feature type="binding site" evidence="1">
    <location>
        <position position="254"/>
    </location>
    <ligand>
        <name>substrate</name>
    </ligand>
</feature>
<feature type="binding site" evidence="1">
    <location>
        <position position="266"/>
    </location>
    <ligand>
        <name>substrate</name>
    </ligand>
</feature>
<feature type="modified residue" description="N6-carboxylysine" evidence="1">
    <location>
        <position position="102"/>
    </location>
</feature>
<dbReference type="EC" id="3.5.2.3" evidence="1"/>
<dbReference type="EMBL" id="CP000884">
    <property type="protein sequence ID" value="ABX34029.1"/>
    <property type="molecule type" value="Genomic_DNA"/>
</dbReference>
<dbReference type="RefSeq" id="WP_012203315.1">
    <property type="nucleotide sequence ID" value="NC_010002.1"/>
</dbReference>
<dbReference type="SMR" id="A9BSM4"/>
<dbReference type="STRING" id="398578.Daci_1385"/>
<dbReference type="GeneID" id="24117861"/>
<dbReference type="KEGG" id="dac:Daci_1385"/>
<dbReference type="eggNOG" id="COG0418">
    <property type="taxonomic scope" value="Bacteria"/>
</dbReference>
<dbReference type="HOGENOM" id="CLU_041558_1_0_4"/>
<dbReference type="UniPathway" id="UPA00070">
    <property type="reaction ID" value="UER00117"/>
</dbReference>
<dbReference type="Proteomes" id="UP000000784">
    <property type="component" value="Chromosome"/>
</dbReference>
<dbReference type="GO" id="GO:0005737">
    <property type="term" value="C:cytoplasm"/>
    <property type="evidence" value="ECO:0007669"/>
    <property type="project" value="TreeGrafter"/>
</dbReference>
<dbReference type="GO" id="GO:0004151">
    <property type="term" value="F:dihydroorotase activity"/>
    <property type="evidence" value="ECO:0007669"/>
    <property type="project" value="UniProtKB-UniRule"/>
</dbReference>
<dbReference type="GO" id="GO:0008270">
    <property type="term" value="F:zinc ion binding"/>
    <property type="evidence" value="ECO:0007669"/>
    <property type="project" value="UniProtKB-UniRule"/>
</dbReference>
<dbReference type="GO" id="GO:0006207">
    <property type="term" value="P:'de novo' pyrimidine nucleobase biosynthetic process"/>
    <property type="evidence" value="ECO:0007669"/>
    <property type="project" value="TreeGrafter"/>
</dbReference>
<dbReference type="GO" id="GO:0044205">
    <property type="term" value="P:'de novo' UMP biosynthetic process"/>
    <property type="evidence" value="ECO:0007669"/>
    <property type="project" value="UniProtKB-UniRule"/>
</dbReference>
<dbReference type="CDD" id="cd01294">
    <property type="entry name" value="DHOase"/>
    <property type="match status" value="1"/>
</dbReference>
<dbReference type="FunFam" id="3.20.20.140:FF:000006">
    <property type="entry name" value="Dihydroorotase"/>
    <property type="match status" value="1"/>
</dbReference>
<dbReference type="Gene3D" id="3.20.20.140">
    <property type="entry name" value="Metal-dependent hydrolases"/>
    <property type="match status" value="1"/>
</dbReference>
<dbReference type="HAMAP" id="MF_00219">
    <property type="entry name" value="PyrC_classII"/>
    <property type="match status" value="1"/>
</dbReference>
<dbReference type="InterPro" id="IPR006680">
    <property type="entry name" value="Amidohydro-rel"/>
</dbReference>
<dbReference type="InterPro" id="IPR004721">
    <property type="entry name" value="DHOdimr"/>
</dbReference>
<dbReference type="InterPro" id="IPR002195">
    <property type="entry name" value="Dihydroorotase_CS"/>
</dbReference>
<dbReference type="InterPro" id="IPR032466">
    <property type="entry name" value="Metal_Hydrolase"/>
</dbReference>
<dbReference type="NCBIfam" id="TIGR00856">
    <property type="entry name" value="pyrC_dimer"/>
    <property type="match status" value="1"/>
</dbReference>
<dbReference type="PANTHER" id="PTHR43137">
    <property type="entry name" value="DIHYDROOROTASE"/>
    <property type="match status" value="1"/>
</dbReference>
<dbReference type="PANTHER" id="PTHR43137:SF1">
    <property type="entry name" value="DIHYDROOROTASE"/>
    <property type="match status" value="1"/>
</dbReference>
<dbReference type="Pfam" id="PF01979">
    <property type="entry name" value="Amidohydro_1"/>
    <property type="match status" value="1"/>
</dbReference>
<dbReference type="PIRSF" id="PIRSF001237">
    <property type="entry name" value="DHOdimr"/>
    <property type="match status" value="1"/>
</dbReference>
<dbReference type="SUPFAM" id="SSF51556">
    <property type="entry name" value="Metallo-dependent hydrolases"/>
    <property type="match status" value="1"/>
</dbReference>
<dbReference type="PROSITE" id="PS00482">
    <property type="entry name" value="DIHYDROOROTASE_1"/>
    <property type="match status" value="1"/>
</dbReference>
<dbReference type="PROSITE" id="PS00483">
    <property type="entry name" value="DIHYDROOROTASE_2"/>
    <property type="match status" value="1"/>
</dbReference>
<comment type="function">
    <text evidence="1">Catalyzes the reversible cyclization of carbamoyl aspartate to dihydroorotate.</text>
</comment>
<comment type="catalytic activity">
    <reaction evidence="1">
        <text>(S)-dihydroorotate + H2O = N-carbamoyl-L-aspartate + H(+)</text>
        <dbReference type="Rhea" id="RHEA:24296"/>
        <dbReference type="ChEBI" id="CHEBI:15377"/>
        <dbReference type="ChEBI" id="CHEBI:15378"/>
        <dbReference type="ChEBI" id="CHEBI:30864"/>
        <dbReference type="ChEBI" id="CHEBI:32814"/>
        <dbReference type="EC" id="3.5.2.3"/>
    </reaction>
</comment>
<comment type="cofactor">
    <cofactor evidence="1">
        <name>Zn(2+)</name>
        <dbReference type="ChEBI" id="CHEBI:29105"/>
    </cofactor>
    <text evidence="1">Binds 2 Zn(2+) ions per subunit.</text>
</comment>
<comment type="pathway">
    <text evidence="1">Pyrimidine metabolism; UMP biosynthesis via de novo pathway; (S)-dihydroorotate from bicarbonate: step 3/3.</text>
</comment>
<comment type="subunit">
    <text evidence="1">Homodimer.</text>
</comment>
<comment type="similarity">
    <text evidence="1">Belongs to the metallo-dependent hydrolases superfamily. DHOase family. Class II DHOase subfamily.</text>
</comment>
<protein>
    <recommendedName>
        <fullName evidence="1">Dihydroorotase</fullName>
        <shortName evidence="1">DHOase</shortName>
        <ecNumber evidence="1">3.5.2.3</ecNumber>
    </recommendedName>
</protein>
<reference key="1">
    <citation type="submission" date="2007-11" db="EMBL/GenBank/DDBJ databases">
        <title>Complete sequence of Delftia acidovorans DSM 14801 / SPH-1.</title>
        <authorList>
            <person name="Copeland A."/>
            <person name="Lucas S."/>
            <person name="Lapidus A."/>
            <person name="Barry K."/>
            <person name="Glavina del Rio T."/>
            <person name="Dalin E."/>
            <person name="Tice H."/>
            <person name="Pitluck S."/>
            <person name="Lowry S."/>
            <person name="Clum A."/>
            <person name="Schmutz J."/>
            <person name="Larimer F."/>
            <person name="Land M."/>
            <person name="Hauser L."/>
            <person name="Kyrpides N."/>
            <person name="Kim E."/>
            <person name="Schleheck D."/>
            <person name="Richardson P."/>
        </authorList>
    </citation>
    <scope>NUCLEOTIDE SEQUENCE [LARGE SCALE GENOMIC DNA]</scope>
    <source>
        <strain>DSM 14801 / SPH-1</strain>
    </source>
</reference>
<name>PYRC_DELAS</name>
<sequence>MTASTNTLTITRPDDWHLHVRDGEAMRSVVPHTAAQFARAIIMPNLKPPVTTAEQALEYKQRILSAVPEGMAFEPLMTLYLTDNLPPEEIVRAKAAGVVACKLYPAGATTNSDHGVTDLRKIYPTLEAMQREGLLLLVHGEVTSSDIDLFDREAAFIDQHLIPLRRDFPELKIVFEHITTREAAQYVTEADRFVGATITPQHLLFNRNAIFTGGIRPHYYCLPVLKRETHRLALVEAATSGLPKFFLGTDSAPHAAHLKEHATGCAGCYSAHAAIEMYAEAFDNAGALDKLEAFASFNGPDFYSLPRNTGKITLVRESWTPPDSFAFGEAQLKPLRSGEALPWKLV</sequence>
<gene>
    <name evidence="1" type="primary">pyrC</name>
    <name type="ordered locus">Daci_1385</name>
</gene>
<accession>A9BSM4</accession>
<organism>
    <name type="scientific">Delftia acidovorans (strain DSM 14801 / SPH-1)</name>
    <dbReference type="NCBI Taxonomy" id="398578"/>
    <lineage>
        <taxon>Bacteria</taxon>
        <taxon>Pseudomonadati</taxon>
        <taxon>Pseudomonadota</taxon>
        <taxon>Betaproteobacteria</taxon>
        <taxon>Burkholderiales</taxon>
        <taxon>Comamonadaceae</taxon>
        <taxon>Delftia</taxon>
    </lineage>
</organism>
<proteinExistence type="inferred from homology"/>